<feature type="chain" id="PRO_0000286837" description="Ribonuclease J 2">
    <location>
        <begin position="1"/>
        <end position="557"/>
    </location>
</feature>
<feature type="binding site" evidence="2">
    <location>
        <position position="76"/>
    </location>
    <ligand>
        <name>Zn(2+)</name>
        <dbReference type="ChEBI" id="CHEBI:29105"/>
        <label>1</label>
        <note>catalytic</note>
    </ligand>
</feature>
<feature type="binding site" evidence="2">
    <location>
        <position position="78"/>
    </location>
    <ligand>
        <name>Zn(2+)</name>
        <dbReference type="ChEBI" id="CHEBI:29105"/>
        <label>1</label>
        <note>catalytic</note>
    </ligand>
</feature>
<feature type="binding site" evidence="2">
    <location>
        <position position="144"/>
    </location>
    <ligand>
        <name>Zn(2+)</name>
        <dbReference type="ChEBI" id="CHEBI:29105"/>
        <label>1</label>
        <note>catalytic</note>
    </ligand>
</feature>
<feature type="binding site" evidence="2">
    <location>
        <position position="166"/>
    </location>
    <ligand>
        <name>Zn(2+)</name>
        <dbReference type="ChEBI" id="CHEBI:29105"/>
        <label>1</label>
        <note>catalytic</note>
    </ligand>
</feature>
<feature type="binding site" evidence="2">
    <location>
        <begin position="366"/>
        <end position="370"/>
    </location>
    <ligand>
        <name>substrate</name>
    </ligand>
</feature>
<feature type="mutagenesis site" description="Grows like wild-type." evidence="5">
    <original>HGH</original>
    <variation>AGA</variation>
    <location>
        <begin position="76"/>
        <end position="78"/>
    </location>
</feature>
<proteinExistence type="evidence at protein level"/>
<organism>
    <name type="scientific">Staphylococcus aureus (strain NCTC 8325 / PS 47)</name>
    <dbReference type="NCBI Taxonomy" id="93061"/>
    <lineage>
        <taxon>Bacteria</taxon>
        <taxon>Bacillati</taxon>
        <taxon>Bacillota</taxon>
        <taxon>Bacilli</taxon>
        <taxon>Bacillales</taxon>
        <taxon>Staphylococcaceae</taxon>
        <taxon>Staphylococcus</taxon>
    </lineage>
</organism>
<keyword id="KW-0963">Cytoplasm</keyword>
<keyword id="KW-0255">Endonuclease</keyword>
<keyword id="KW-0269">Exonuclease</keyword>
<keyword id="KW-0378">Hydrolase</keyword>
<keyword id="KW-0479">Metal-binding</keyword>
<keyword id="KW-0507">mRNA processing</keyword>
<keyword id="KW-0540">Nuclease</keyword>
<keyword id="KW-1185">Reference proteome</keyword>
<keyword id="KW-0694">RNA-binding</keyword>
<keyword id="KW-0698">rRNA processing</keyword>
<keyword id="KW-0862">Zinc</keyword>
<name>RNJ2_STAA8</name>
<accession>Q2FZ19</accession>
<reference key="1">
    <citation type="book" date="2006" name="Gram positive pathogens, 2nd edition">
        <title>The Staphylococcus aureus NCTC 8325 genome.</title>
        <editorList>
            <person name="Fischetti V."/>
            <person name="Novick R."/>
            <person name="Ferretti J."/>
            <person name="Portnoy D."/>
            <person name="Rood J."/>
        </editorList>
        <authorList>
            <person name="Gillaspy A.F."/>
            <person name="Worrell V."/>
            <person name="Orvis J."/>
            <person name="Roe B.A."/>
            <person name="Dyer D.W."/>
            <person name="Iandolo J.J."/>
        </authorList>
    </citation>
    <scope>NUCLEOTIDE SEQUENCE [LARGE SCALE GENOMIC DNA]</scope>
    <source>
        <strain>NCTC 8325 / PS 47</strain>
    </source>
</reference>
<reference key="2">
    <citation type="journal article" date="2011" name="J. Bacteriol.">
        <title>Characterization of components of the Staphylococcus aureus mRNA degradosome holoenzyme-like complex.</title>
        <authorList>
            <person name="Roux C.M."/>
            <person name="DeMuth J.P."/>
            <person name="Dunman P.M."/>
        </authorList>
    </citation>
    <scope>INTERACTION WITH RNJB</scope>
    <scope>SUBUNIT</scope>
    <source>
        <strain>UAMS-1</strain>
    </source>
</reference>
<reference key="3">
    <citation type="journal article" date="2012" name="Appl. Environ. Microbiol.">
        <title>New range of vectors with a stringent 5-fluoroorotic acid-based counterselection system for generating mutants by allelic replacement in Staphylococcus aureus.</title>
        <authorList>
            <person name="Redder P."/>
            <person name="Linder P."/>
        </authorList>
    </citation>
    <scope>DISRUPTION PHENOTYPE</scope>
    <source>
        <strain>SA564</strain>
    </source>
</reference>
<reference key="4">
    <citation type="journal article" date="2014" name="PLoS Genet.">
        <title>Transcriptome-wide analyses of 5'-ends in RNase J mutants of a gram-positive pathogen reveal a role in RNA maturation, regulation and degradation.</title>
        <authorList>
            <person name="Linder P."/>
            <person name="Lemeille S."/>
            <person name="Redder P."/>
        </authorList>
    </citation>
    <scope>FUNCTION IN 16S RRNA MATURATION</scope>
    <scope>DISRUPTION PHENOTYPE</scope>
    <scope>MUTAGENESIS OF 76-HIS--HIS-78</scope>
    <source>
        <strain>SA564</strain>
    </source>
</reference>
<comment type="function">
    <text evidence="5">An RNase that has 5'-3' exonuclease and endonuclease activity, with the exonuclease activity probably being most important in vivo. Involved in maturation of 16S rRNA, rnpB (the RNA component of RNase P) maturation and degradation, and mRNA maturation and/or decay. This subunit probably plays a structural rather than enzymatic role as mutation of its putative active site gives no phenotype, and its deletion is partially complemented by inactive RNase J1.</text>
</comment>
<comment type="cofactor">
    <cofactor evidence="2">
        <name>Zn(2+)</name>
        <dbReference type="ChEBI" id="CHEBI:29105"/>
    </cofactor>
    <text evidence="2">Binds up to 2 Zn(2+) ions per subunit. It is not clear if Zn(2+) or Mg(2+) is physiologically important.</text>
</comment>
<comment type="subunit">
    <text evidence="1 3">Homodimer (By similarity). Component of a possible RNA degradosome complex composed of cshA, eno, pfkA, pnp, rnjA, rnjB, rnpA and rny. Interacts specifically with RNase J1.</text>
</comment>
<comment type="subcellular location">
    <subcellularLocation>
        <location evidence="2">Cytoplasm</location>
    </subcellularLocation>
</comment>
<comment type="disruption phenotype">
    <text evidence="4 5">Very sensitive to temperature and medium changes; slow growth at 37 degrees Celsius on Mueller-Hinton medium, poor growth at 30 degrees Celsius. No growth on other media at 37 degrees Celsius unless supplemented with MgCl(2), nor at 42 or 25 degrees Celsius. Double rnj1-rnj2 mutant grows much slower than either single mutant and only at 37 degrees Celsius.</text>
</comment>
<comment type="similarity">
    <text evidence="2">Belongs to the metallo-beta-lactamase superfamily. RNA-metabolizing metallo-beta-lactamase-like family. Bacterial RNase J subfamily.</text>
</comment>
<comment type="sequence caution" evidence="6">
    <conflict type="erroneous initiation">
        <sequence resource="EMBL-CDS" id="ABD30353"/>
    </conflict>
    <text>Truncated N-terminus.</text>
</comment>
<evidence type="ECO:0000250" key="1"/>
<evidence type="ECO:0000255" key="2">
    <source>
        <dbReference type="HAMAP-Rule" id="MF_01491"/>
    </source>
</evidence>
<evidence type="ECO:0000269" key="3">
    <source>
    </source>
</evidence>
<evidence type="ECO:0000269" key="4">
    <source>
    </source>
</evidence>
<evidence type="ECO:0000269" key="5">
    <source>
    </source>
</evidence>
<evidence type="ECO:0000305" key="6"/>
<sequence length="557" mass="62604">MSLIKKKNKDIRIIPLGGVGEIAKNMYIVEVDDEMFMLDAGLMFPEDEMLGIDIVIPDISYVLENKDKLKGIFLTHGHEHAIGAVSYVLEQLDAPVYGSKLTIALIKENMKARNIDKKVRYYTVNNDSIMRFKNVNISFFNTTHSIPDSLGVCIHTSYGAIVYTGEFKFDQSLHGHYAPDIKRMAEIGEEGVFVLISDSTEAEKPGYNTPENVIEHHMYDAFAKVRGRLIVSCYASNFIRIQQVLNIASKLNRKVSFLGRSLESSFNIARKMGYFDIPKDLLIPITEVDNYPKNEVIIIATGMQGEPVEALSQMAQHKHKIMNIEEGDSVFLAITASANMEVIIANTLNELVRAGAHIIPNNKKIHASSHGCMEELKMMINIMKPEYFIPVQGEFKMQIAHAKLAAEAGVAPEKIFLVEKGDVINYNGKDMILNEKVNSGNILIDGIGIGDVGNIVLRDRHLLAEDGIFIAVVTLDPKNRRIAAGPEIQSRGFVYVRESEDLLREAEEKVREIVEAGLQEKRIEWSEIKQNMRDQISKLLFESTKRRPMIIPVISEI</sequence>
<protein>
    <recommendedName>
        <fullName evidence="2">Ribonuclease J 2</fullName>
        <shortName evidence="2">RNase J2</shortName>
        <ecNumber evidence="2">3.1.-.-</ecNumber>
    </recommendedName>
</protein>
<gene>
    <name evidence="2" type="primary">rnj2</name>
    <name type="ordered locus">SAOUHSC_01252</name>
</gene>
<dbReference type="EC" id="3.1.-.-" evidence="2"/>
<dbReference type="EMBL" id="CP000253">
    <property type="protein sequence ID" value="ABD30353.1"/>
    <property type="status" value="ALT_INIT"/>
    <property type="molecule type" value="Genomic_DNA"/>
</dbReference>
<dbReference type="RefSeq" id="YP_499785.1">
    <property type="nucleotide sequence ID" value="NC_007795.1"/>
</dbReference>
<dbReference type="SMR" id="Q2FZ19"/>
<dbReference type="STRING" id="93061.SAOUHSC_01252"/>
<dbReference type="PaxDb" id="1280-SAXN108_1279"/>
<dbReference type="ABCD" id="Q2FZ19">
    <property type="antibodies" value="1 sequenced antibody"/>
</dbReference>
<dbReference type="GeneID" id="3919983"/>
<dbReference type="KEGG" id="sao:SAOUHSC_01252"/>
<dbReference type="PATRIC" id="fig|93061.5.peg.1146"/>
<dbReference type="eggNOG" id="COG0595">
    <property type="taxonomic scope" value="Bacteria"/>
</dbReference>
<dbReference type="HOGENOM" id="CLU_008727_3_1_9"/>
<dbReference type="OrthoDB" id="9758375at2"/>
<dbReference type="Proteomes" id="UP000008816">
    <property type="component" value="Chromosome"/>
</dbReference>
<dbReference type="GO" id="GO:0005737">
    <property type="term" value="C:cytoplasm"/>
    <property type="evidence" value="ECO:0007669"/>
    <property type="project" value="UniProtKB-SubCell"/>
</dbReference>
<dbReference type="GO" id="GO:0004534">
    <property type="term" value="F:5'-3' RNA exonuclease activity"/>
    <property type="evidence" value="ECO:0007669"/>
    <property type="project" value="UniProtKB-UniRule"/>
</dbReference>
<dbReference type="GO" id="GO:0003723">
    <property type="term" value="F:RNA binding"/>
    <property type="evidence" value="ECO:0007669"/>
    <property type="project" value="UniProtKB-UniRule"/>
</dbReference>
<dbReference type="GO" id="GO:0004521">
    <property type="term" value="F:RNA endonuclease activity"/>
    <property type="evidence" value="ECO:0007669"/>
    <property type="project" value="UniProtKB-UniRule"/>
</dbReference>
<dbReference type="GO" id="GO:0008270">
    <property type="term" value="F:zinc ion binding"/>
    <property type="evidence" value="ECO:0007669"/>
    <property type="project" value="InterPro"/>
</dbReference>
<dbReference type="GO" id="GO:0006397">
    <property type="term" value="P:mRNA processing"/>
    <property type="evidence" value="ECO:0007669"/>
    <property type="project" value="UniProtKB-KW"/>
</dbReference>
<dbReference type="GO" id="GO:0006364">
    <property type="term" value="P:rRNA processing"/>
    <property type="evidence" value="ECO:0007669"/>
    <property type="project" value="UniProtKB-UniRule"/>
</dbReference>
<dbReference type="CDD" id="cd07714">
    <property type="entry name" value="RNaseJ_MBL-fold"/>
    <property type="match status" value="1"/>
</dbReference>
<dbReference type="FunFam" id="3.10.20.580:FF:000001">
    <property type="entry name" value="Ribonuclease J"/>
    <property type="match status" value="1"/>
</dbReference>
<dbReference type="FunFam" id="3.40.50.10710:FF:000002">
    <property type="entry name" value="Ribonuclease J 2"/>
    <property type="match status" value="1"/>
</dbReference>
<dbReference type="Gene3D" id="3.10.20.580">
    <property type="match status" value="1"/>
</dbReference>
<dbReference type="Gene3D" id="3.40.50.10710">
    <property type="entry name" value="Metallo-hydrolase/oxidoreductase"/>
    <property type="match status" value="1"/>
</dbReference>
<dbReference type="Gene3D" id="3.60.15.10">
    <property type="entry name" value="Ribonuclease Z/Hydroxyacylglutathione hydrolase-like"/>
    <property type="match status" value="1"/>
</dbReference>
<dbReference type="HAMAP" id="MF_01491">
    <property type="entry name" value="RNase_J_bact"/>
    <property type="match status" value="1"/>
</dbReference>
<dbReference type="InterPro" id="IPR001279">
    <property type="entry name" value="Metallo-B-lactamas"/>
</dbReference>
<dbReference type="InterPro" id="IPR036866">
    <property type="entry name" value="RibonucZ/Hydroxyglut_hydro"/>
</dbReference>
<dbReference type="InterPro" id="IPR011108">
    <property type="entry name" value="RMMBL"/>
</dbReference>
<dbReference type="InterPro" id="IPR004613">
    <property type="entry name" value="RNase_J"/>
</dbReference>
<dbReference type="InterPro" id="IPR042173">
    <property type="entry name" value="RNase_J_2"/>
</dbReference>
<dbReference type="InterPro" id="IPR055132">
    <property type="entry name" value="RNase_J_b_CASP"/>
</dbReference>
<dbReference type="InterPro" id="IPR030854">
    <property type="entry name" value="RNase_J_bac"/>
</dbReference>
<dbReference type="InterPro" id="IPR041636">
    <property type="entry name" value="RNase_J_C"/>
</dbReference>
<dbReference type="NCBIfam" id="TIGR00649">
    <property type="entry name" value="MG423"/>
    <property type="match status" value="1"/>
</dbReference>
<dbReference type="PANTHER" id="PTHR43694">
    <property type="entry name" value="RIBONUCLEASE J"/>
    <property type="match status" value="1"/>
</dbReference>
<dbReference type="PANTHER" id="PTHR43694:SF4">
    <property type="entry name" value="RIBONUCLEASE J 2"/>
    <property type="match status" value="1"/>
</dbReference>
<dbReference type="Pfam" id="PF00753">
    <property type="entry name" value="Lactamase_B"/>
    <property type="match status" value="1"/>
</dbReference>
<dbReference type="Pfam" id="PF07521">
    <property type="entry name" value="RMMBL"/>
    <property type="match status" value="1"/>
</dbReference>
<dbReference type="Pfam" id="PF22505">
    <property type="entry name" value="RNase_J_b_CASP"/>
    <property type="match status" value="1"/>
</dbReference>
<dbReference type="Pfam" id="PF17770">
    <property type="entry name" value="RNase_J_C"/>
    <property type="match status" value="1"/>
</dbReference>
<dbReference type="PIRSF" id="PIRSF004803">
    <property type="entry name" value="RnjA"/>
    <property type="match status" value="1"/>
</dbReference>
<dbReference type="SMART" id="SM00849">
    <property type="entry name" value="Lactamase_B"/>
    <property type="match status" value="1"/>
</dbReference>
<dbReference type="SUPFAM" id="SSF56281">
    <property type="entry name" value="Metallo-hydrolase/oxidoreductase"/>
    <property type="match status" value="1"/>
</dbReference>